<name>LIPB_RHOPT</name>
<organism>
    <name type="scientific">Rhodopseudomonas palustris (strain TIE-1)</name>
    <dbReference type="NCBI Taxonomy" id="395960"/>
    <lineage>
        <taxon>Bacteria</taxon>
        <taxon>Pseudomonadati</taxon>
        <taxon>Pseudomonadota</taxon>
        <taxon>Alphaproteobacteria</taxon>
        <taxon>Hyphomicrobiales</taxon>
        <taxon>Nitrobacteraceae</taxon>
        <taxon>Rhodopseudomonas</taxon>
    </lineage>
</organism>
<gene>
    <name evidence="1" type="primary">lipB</name>
    <name type="ordered locus">Rpal_3579</name>
</gene>
<accession>B3QAV6</accession>
<evidence type="ECO:0000255" key="1">
    <source>
        <dbReference type="HAMAP-Rule" id="MF_00013"/>
    </source>
</evidence>
<evidence type="ECO:0000255" key="2">
    <source>
        <dbReference type="PROSITE-ProRule" id="PRU01067"/>
    </source>
</evidence>
<keyword id="KW-0012">Acyltransferase</keyword>
<keyword id="KW-0963">Cytoplasm</keyword>
<keyword id="KW-0808">Transferase</keyword>
<sequence length="245" mass="26825">MINVSTSPRQTLDWTALKPADGSPAVEWRISDSPVPYPEAVATMEARAAAIAAGEATELVWLLEHPPLYTAGTSGHASDLLEERFPLFTTGRGGQLTYHGPGQRVAYVMLDLKRRRPDVRAYVAALEQWIIATLDAFNIRCERREDRVGVWVRRPDKGVGYEDKIAAIGVRLKRWVSLHGIAINVEPDLSHFKAIVPCGISDPRYGVTSLVDLGLPVVMTDVDIALRAAFENIFGETRAAAPAGI</sequence>
<reference key="1">
    <citation type="submission" date="2008-05" db="EMBL/GenBank/DDBJ databases">
        <title>Complete sequence of Rhodopseudomonas palustris TIE-1.</title>
        <authorList>
            <consortium name="US DOE Joint Genome Institute"/>
            <person name="Lucas S."/>
            <person name="Copeland A."/>
            <person name="Lapidus A."/>
            <person name="Glavina del Rio T."/>
            <person name="Dalin E."/>
            <person name="Tice H."/>
            <person name="Pitluck S."/>
            <person name="Chain P."/>
            <person name="Malfatti S."/>
            <person name="Shin M."/>
            <person name="Vergez L."/>
            <person name="Lang D."/>
            <person name="Schmutz J."/>
            <person name="Larimer F."/>
            <person name="Land M."/>
            <person name="Hauser L."/>
            <person name="Kyrpides N."/>
            <person name="Mikhailova N."/>
            <person name="Emerson D."/>
            <person name="Newman D.K."/>
            <person name="Roden E."/>
            <person name="Richardson P."/>
        </authorList>
    </citation>
    <scope>NUCLEOTIDE SEQUENCE [LARGE SCALE GENOMIC DNA]</scope>
    <source>
        <strain>TIE-1</strain>
    </source>
</reference>
<comment type="function">
    <text evidence="1">Catalyzes the transfer of endogenously produced octanoic acid from octanoyl-acyl-carrier-protein onto the lipoyl domains of lipoate-dependent enzymes. Lipoyl-ACP can also act as a substrate although octanoyl-ACP is likely to be the physiological substrate.</text>
</comment>
<comment type="catalytic activity">
    <reaction evidence="1">
        <text>octanoyl-[ACP] + L-lysyl-[protein] = N(6)-octanoyl-L-lysyl-[protein] + holo-[ACP] + H(+)</text>
        <dbReference type="Rhea" id="RHEA:17665"/>
        <dbReference type="Rhea" id="RHEA-COMP:9636"/>
        <dbReference type="Rhea" id="RHEA-COMP:9685"/>
        <dbReference type="Rhea" id="RHEA-COMP:9752"/>
        <dbReference type="Rhea" id="RHEA-COMP:9928"/>
        <dbReference type="ChEBI" id="CHEBI:15378"/>
        <dbReference type="ChEBI" id="CHEBI:29969"/>
        <dbReference type="ChEBI" id="CHEBI:64479"/>
        <dbReference type="ChEBI" id="CHEBI:78463"/>
        <dbReference type="ChEBI" id="CHEBI:78809"/>
        <dbReference type="EC" id="2.3.1.181"/>
    </reaction>
</comment>
<comment type="pathway">
    <text evidence="1">Protein modification; protein lipoylation via endogenous pathway; protein N(6)-(lipoyl)lysine from octanoyl-[acyl-carrier-protein]: step 1/2.</text>
</comment>
<comment type="subcellular location">
    <subcellularLocation>
        <location evidence="1">Cytoplasm</location>
    </subcellularLocation>
</comment>
<comment type="miscellaneous">
    <text evidence="1">In the reaction, the free carboxyl group of octanoic acid is attached via an amide linkage to the epsilon-amino group of a specific lysine residue of lipoyl domains of lipoate-dependent enzymes.</text>
</comment>
<comment type="similarity">
    <text evidence="1">Belongs to the LipB family.</text>
</comment>
<feature type="chain" id="PRO_1000089475" description="Octanoyltransferase">
    <location>
        <begin position="1"/>
        <end position="245"/>
    </location>
</feature>
<feature type="domain" description="BPL/LPL catalytic" evidence="2">
    <location>
        <begin position="54"/>
        <end position="238"/>
    </location>
</feature>
<feature type="active site" description="Acyl-thioester intermediate" evidence="1">
    <location>
        <position position="198"/>
    </location>
</feature>
<feature type="binding site" evidence="1">
    <location>
        <begin position="92"/>
        <end position="99"/>
    </location>
    <ligand>
        <name>substrate</name>
    </ligand>
</feature>
<feature type="binding site" evidence="1">
    <location>
        <begin position="167"/>
        <end position="169"/>
    </location>
    <ligand>
        <name>substrate</name>
    </ligand>
</feature>
<feature type="binding site" evidence="1">
    <location>
        <begin position="180"/>
        <end position="182"/>
    </location>
    <ligand>
        <name>substrate</name>
    </ligand>
</feature>
<feature type="site" description="Lowers pKa of active site Cys" evidence="1">
    <location>
        <position position="164"/>
    </location>
</feature>
<protein>
    <recommendedName>
        <fullName evidence="1">Octanoyltransferase</fullName>
        <ecNumber evidence="1">2.3.1.181</ecNumber>
    </recommendedName>
    <alternativeName>
        <fullName evidence="1">Lipoate-protein ligase B</fullName>
    </alternativeName>
    <alternativeName>
        <fullName evidence="1">Lipoyl/octanoyl transferase</fullName>
    </alternativeName>
    <alternativeName>
        <fullName evidence="1">Octanoyl-[acyl-carrier-protein]-protein N-octanoyltransferase</fullName>
    </alternativeName>
</protein>
<proteinExistence type="inferred from homology"/>
<dbReference type="EC" id="2.3.1.181" evidence="1"/>
<dbReference type="EMBL" id="CP001096">
    <property type="protein sequence ID" value="ACF02079.1"/>
    <property type="molecule type" value="Genomic_DNA"/>
</dbReference>
<dbReference type="RefSeq" id="WP_012496592.1">
    <property type="nucleotide sequence ID" value="NC_011004.1"/>
</dbReference>
<dbReference type="SMR" id="B3QAV6"/>
<dbReference type="KEGG" id="rpt:Rpal_3579"/>
<dbReference type="HOGENOM" id="CLU_035168_3_0_5"/>
<dbReference type="OrthoDB" id="9787061at2"/>
<dbReference type="UniPathway" id="UPA00538">
    <property type="reaction ID" value="UER00592"/>
</dbReference>
<dbReference type="Proteomes" id="UP000001725">
    <property type="component" value="Chromosome"/>
</dbReference>
<dbReference type="GO" id="GO:0005737">
    <property type="term" value="C:cytoplasm"/>
    <property type="evidence" value="ECO:0007669"/>
    <property type="project" value="UniProtKB-SubCell"/>
</dbReference>
<dbReference type="GO" id="GO:0033819">
    <property type="term" value="F:lipoyl(octanoyl) transferase activity"/>
    <property type="evidence" value="ECO:0007669"/>
    <property type="project" value="UniProtKB-EC"/>
</dbReference>
<dbReference type="GO" id="GO:0036211">
    <property type="term" value="P:protein modification process"/>
    <property type="evidence" value="ECO:0007669"/>
    <property type="project" value="InterPro"/>
</dbReference>
<dbReference type="CDD" id="cd16444">
    <property type="entry name" value="LipB"/>
    <property type="match status" value="1"/>
</dbReference>
<dbReference type="FunFam" id="3.30.930.10:FF:000159">
    <property type="entry name" value="Octanoyltransferase"/>
    <property type="match status" value="1"/>
</dbReference>
<dbReference type="Gene3D" id="3.30.930.10">
    <property type="entry name" value="Bira Bifunctional Protein, Domain 2"/>
    <property type="match status" value="1"/>
</dbReference>
<dbReference type="HAMAP" id="MF_00013">
    <property type="entry name" value="LipB"/>
    <property type="match status" value="1"/>
</dbReference>
<dbReference type="InterPro" id="IPR045864">
    <property type="entry name" value="aa-tRNA-synth_II/BPL/LPL"/>
</dbReference>
<dbReference type="InterPro" id="IPR004143">
    <property type="entry name" value="BPL_LPL_catalytic"/>
</dbReference>
<dbReference type="InterPro" id="IPR000544">
    <property type="entry name" value="Octanoyltransferase"/>
</dbReference>
<dbReference type="InterPro" id="IPR020605">
    <property type="entry name" value="Octanoyltransferase_CS"/>
</dbReference>
<dbReference type="NCBIfam" id="TIGR00214">
    <property type="entry name" value="lipB"/>
    <property type="match status" value="1"/>
</dbReference>
<dbReference type="NCBIfam" id="NF010921">
    <property type="entry name" value="PRK14341.1"/>
    <property type="match status" value="1"/>
</dbReference>
<dbReference type="NCBIfam" id="NF010925">
    <property type="entry name" value="PRK14345.1"/>
    <property type="match status" value="1"/>
</dbReference>
<dbReference type="PANTHER" id="PTHR10993:SF7">
    <property type="entry name" value="LIPOYLTRANSFERASE 2, MITOCHONDRIAL-RELATED"/>
    <property type="match status" value="1"/>
</dbReference>
<dbReference type="PANTHER" id="PTHR10993">
    <property type="entry name" value="OCTANOYLTRANSFERASE"/>
    <property type="match status" value="1"/>
</dbReference>
<dbReference type="Pfam" id="PF21948">
    <property type="entry name" value="LplA-B_cat"/>
    <property type="match status" value="1"/>
</dbReference>
<dbReference type="PIRSF" id="PIRSF016262">
    <property type="entry name" value="LPLase"/>
    <property type="match status" value="1"/>
</dbReference>
<dbReference type="SUPFAM" id="SSF55681">
    <property type="entry name" value="Class II aaRS and biotin synthetases"/>
    <property type="match status" value="1"/>
</dbReference>
<dbReference type="PROSITE" id="PS51733">
    <property type="entry name" value="BPL_LPL_CATALYTIC"/>
    <property type="match status" value="1"/>
</dbReference>
<dbReference type="PROSITE" id="PS01313">
    <property type="entry name" value="LIPB"/>
    <property type="match status" value="1"/>
</dbReference>